<gene>
    <name evidence="1" type="primary">hisD</name>
    <name type="ordered locus">RHOS4_22370</name>
    <name type="ORF">RSP_0632</name>
</gene>
<protein>
    <recommendedName>
        <fullName evidence="1">Histidinol dehydrogenase</fullName>
        <shortName evidence="1">HDH</shortName>
        <ecNumber evidence="1">1.1.1.23</ecNumber>
    </recommendedName>
</protein>
<keyword id="KW-0028">Amino-acid biosynthesis</keyword>
<keyword id="KW-0368">Histidine biosynthesis</keyword>
<keyword id="KW-0479">Metal-binding</keyword>
<keyword id="KW-0520">NAD</keyword>
<keyword id="KW-0560">Oxidoreductase</keyword>
<keyword id="KW-1185">Reference proteome</keyword>
<keyword id="KW-0862">Zinc</keyword>
<accession>Q3J079</accession>
<comment type="function">
    <text evidence="1">Catalyzes the sequential NAD-dependent oxidations of L-histidinol to L-histidinaldehyde and then to L-histidine.</text>
</comment>
<comment type="catalytic activity">
    <reaction evidence="1">
        <text>L-histidinol + 2 NAD(+) + H2O = L-histidine + 2 NADH + 3 H(+)</text>
        <dbReference type="Rhea" id="RHEA:20641"/>
        <dbReference type="ChEBI" id="CHEBI:15377"/>
        <dbReference type="ChEBI" id="CHEBI:15378"/>
        <dbReference type="ChEBI" id="CHEBI:57540"/>
        <dbReference type="ChEBI" id="CHEBI:57595"/>
        <dbReference type="ChEBI" id="CHEBI:57699"/>
        <dbReference type="ChEBI" id="CHEBI:57945"/>
        <dbReference type="EC" id="1.1.1.23"/>
    </reaction>
</comment>
<comment type="cofactor">
    <cofactor evidence="1">
        <name>Zn(2+)</name>
        <dbReference type="ChEBI" id="CHEBI:29105"/>
    </cofactor>
    <text evidence="1">Binds 1 zinc ion per subunit.</text>
</comment>
<comment type="pathway">
    <text evidence="1">Amino-acid biosynthesis; L-histidine biosynthesis; L-histidine from 5-phospho-alpha-D-ribose 1-diphosphate: step 9/9.</text>
</comment>
<comment type="similarity">
    <text evidence="1">Belongs to the histidinol dehydrogenase family.</text>
</comment>
<proteinExistence type="inferred from homology"/>
<feature type="chain" id="PRO_0000229863" description="Histidinol dehydrogenase">
    <location>
        <begin position="1"/>
        <end position="434"/>
    </location>
</feature>
<feature type="active site" description="Proton acceptor" evidence="1">
    <location>
        <position position="327"/>
    </location>
</feature>
<feature type="active site" description="Proton acceptor" evidence="1">
    <location>
        <position position="328"/>
    </location>
</feature>
<feature type="binding site" evidence="1">
    <location>
        <position position="130"/>
    </location>
    <ligand>
        <name>NAD(+)</name>
        <dbReference type="ChEBI" id="CHEBI:57540"/>
    </ligand>
</feature>
<feature type="binding site" evidence="1">
    <location>
        <position position="191"/>
    </location>
    <ligand>
        <name>NAD(+)</name>
        <dbReference type="ChEBI" id="CHEBI:57540"/>
    </ligand>
</feature>
<feature type="binding site" evidence="1">
    <location>
        <position position="214"/>
    </location>
    <ligand>
        <name>NAD(+)</name>
        <dbReference type="ChEBI" id="CHEBI:57540"/>
    </ligand>
</feature>
<feature type="binding site" evidence="1">
    <location>
        <position position="237"/>
    </location>
    <ligand>
        <name>substrate</name>
    </ligand>
</feature>
<feature type="binding site" evidence="1">
    <location>
        <position position="259"/>
    </location>
    <ligand>
        <name>substrate</name>
    </ligand>
</feature>
<feature type="binding site" evidence="1">
    <location>
        <position position="259"/>
    </location>
    <ligand>
        <name>Zn(2+)</name>
        <dbReference type="ChEBI" id="CHEBI:29105"/>
    </ligand>
</feature>
<feature type="binding site" evidence="1">
    <location>
        <position position="262"/>
    </location>
    <ligand>
        <name>substrate</name>
    </ligand>
</feature>
<feature type="binding site" evidence="1">
    <location>
        <position position="262"/>
    </location>
    <ligand>
        <name>Zn(2+)</name>
        <dbReference type="ChEBI" id="CHEBI:29105"/>
    </ligand>
</feature>
<feature type="binding site" evidence="1">
    <location>
        <position position="328"/>
    </location>
    <ligand>
        <name>substrate</name>
    </ligand>
</feature>
<feature type="binding site" evidence="1">
    <location>
        <position position="361"/>
    </location>
    <ligand>
        <name>substrate</name>
    </ligand>
</feature>
<feature type="binding site" evidence="1">
    <location>
        <position position="361"/>
    </location>
    <ligand>
        <name>Zn(2+)</name>
        <dbReference type="ChEBI" id="CHEBI:29105"/>
    </ligand>
</feature>
<feature type="binding site" evidence="1">
    <location>
        <position position="415"/>
    </location>
    <ligand>
        <name>substrate</name>
    </ligand>
</feature>
<feature type="binding site" evidence="1">
    <location>
        <position position="420"/>
    </location>
    <ligand>
        <name>substrate</name>
    </ligand>
</feature>
<feature type="binding site" evidence="1">
    <location>
        <position position="420"/>
    </location>
    <ligand>
        <name>Zn(2+)</name>
        <dbReference type="ChEBI" id="CHEBI:29105"/>
    </ligand>
</feature>
<dbReference type="EC" id="1.1.1.23" evidence="1"/>
<dbReference type="EMBL" id="CP000143">
    <property type="protein sequence ID" value="ABA79805.1"/>
    <property type="molecule type" value="Genomic_DNA"/>
</dbReference>
<dbReference type="RefSeq" id="WP_011338373.1">
    <property type="nucleotide sequence ID" value="NC_007493.2"/>
</dbReference>
<dbReference type="RefSeq" id="YP_353706.1">
    <property type="nucleotide sequence ID" value="NC_007493.2"/>
</dbReference>
<dbReference type="SMR" id="Q3J079"/>
<dbReference type="STRING" id="272943.RSP_0632"/>
<dbReference type="EnsemblBacteria" id="ABA79805">
    <property type="protein sequence ID" value="ABA79805"/>
    <property type="gene ID" value="RSP_0632"/>
</dbReference>
<dbReference type="GeneID" id="3718260"/>
<dbReference type="KEGG" id="rsp:RSP_0632"/>
<dbReference type="PATRIC" id="fig|272943.9.peg.2579"/>
<dbReference type="eggNOG" id="COG0141">
    <property type="taxonomic scope" value="Bacteria"/>
</dbReference>
<dbReference type="OrthoDB" id="9805269at2"/>
<dbReference type="PhylomeDB" id="Q3J079"/>
<dbReference type="UniPathway" id="UPA00031">
    <property type="reaction ID" value="UER00014"/>
</dbReference>
<dbReference type="Proteomes" id="UP000002703">
    <property type="component" value="Chromosome 1"/>
</dbReference>
<dbReference type="GO" id="GO:0005829">
    <property type="term" value="C:cytosol"/>
    <property type="evidence" value="ECO:0007669"/>
    <property type="project" value="TreeGrafter"/>
</dbReference>
<dbReference type="GO" id="GO:0004399">
    <property type="term" value="F:histidinol dehydrogenase activity"/>
    <property type="evidence" value="ECO:0007669"/>
    <property type="project" value="UniProtKB-UniRule"/>
</dbReference>
<dbReference type="GO" id="GO:0051287">
    <property type="term" value="F:NAD binding"/>
    <property type="evidence" value="ECO:0007669"/>
    <property type="project" value="InterPro"/>
</dbReference>
<dbReference type="GO" id="GO:0008270">
    <property type="term" value="F:zinc ion binding"/>
    <property type="evidence" value="ECO:0007669"/>
    <property type="project" value="UniProtKB-UniRule"/>
</dbReference>
<dbReference type="GO" id="GO:0000105">
    <property type="term" value="P:L-histidine biosynthetic process"/>
    <property type="evidence" value="ECO:0007669"/>
    <property type="project" value="UniProtKB-UniRule"/>
</dbReference>
<dbReference type="CDD" id="cd06572">
    <property type="entry name" value="Histidinol_dh"/>
    <property type="match status" value="1"/>
</dbReference>
<dbReference type="FunFam" id="3.40.50.1980:FF:000001">
    <property type="entry name" value="Histidinol dehydrogenase"/>
    <property type="match status" value="1"/>
</dbReference>
<dbReference type="FunFam" id="3.40.50.1980:FF:000026">
    <property type="entry name" value="Histidinol dehydrogenase"/>
    <property type="match status" value="1"/>
</dbReference>
<dbReference type="Gene3D" id="1.20.5.1300">
    <property type="match status" value="1"/>
</dbReference>
<dbReference type="Gene3D" id="3.40.50.1980">
    <property type="entry name" value="Nitrogenase molybdenum iron protein domain"/>
    <property type="match status" value="2"/>
</dbReference>
<dbReference type="HAMAP" id="MF_01024">
    <property type="entry name" value="HisD"/>
    <property type="match status" value="1"/>
</dbReference>
<dbReference type="InterPro" id="IPR016161">
    <property type="entry name" value="Ald_DH/histidinol_DH"/>
</dbReference>
<dbReference type="InterPro" id="IPR001692">
    <property type="entry name" value="Histidinol_DH_CS"/>
</dbReference>
<dbReference type="InterPro" id="IPR022695">
    <property type="entry name" value="Histidinol_DH_monofunct"/>
</dbReference>
<dbReference type="InterPro" id="IPR012131">
    <property type="entry name" value="Hstdl_DH"/>
</dbReference>
<dbReference type="NCBIfam" id="TIGR00069">
    <property type="entry name" value="hisD"/>
    <property type="match status" value="1"/>
</dbReference>
<dbReference type="PANTHER" id="PTHR21256:SF2">
    <property type="entry name" value="HISTIDINE BIOSYNTHESIS TRIFUNCTIONAL PROTEIN"/>
    <property type="match status" value="1"/>
</dbReference>
<dbReference type="PANTHER" id="PTHR21256">
    <property type="entry name" value="HISTIDINOL DEHYDROGENASE HDH"/>
    <property type="match status" value="1"/>
</dbReference>
<dbReference type="Pfam" id="PF00815">
    <property type="entry name" value="Histidinol_dh"/>
    <property type="match status" value="1"/>
</dbReference>
<dbReference type="PIRSF" id="PIRSF000099">
    <property type="entry name" value="Histidinol_dh"/>
    <property type="match status" value="1"/>
</dbReference>
<dbReference type="PRINTS" id="PR00083">
    <property type="entry name" value="HOLDHDRGNASE"/>
</dbReference>
<dbReference type="SUPFAM" id="SSF53720">
    <property type="entry name" value="ALDH-like"/>
    <property type="match status" value="1"/>
</dbReference>
<dbReference type="PROSITE" id="PS00611">
    <property type="entry name" value="HISOL_DEHYDROGENASE"/>
    <property type="match status" value="1"/>
</dbReference>
<evidence type="ECO:0000255" key="1">
    <source>
        <dbReference type="HAMAP-Rule" id="MF_01024"/>
    </source>
</evidence>
<organism>
    <name type="scientific">Cereibacter sphaeroides (strain ATCC 17023 / DSM 158 / JCM 6121 / CCUG 31486 / LMG 2827 / NBRC 12203 / NCIMB 8253 / ATH 2.4.1.)</name>
    <name type="common">Rhodobacter sphaeroides</name>
    <dbReference type="NCBI Taxonomy" id="272943"/>
    <lineage>
        <taxon>Bacteria</taxon>
        <taxon>Pseudomonadati</taxon>
        <taxon>Pseudomonadota</taxon>
        <taxon>Alphaproteobacteria</taxon>
        <taxon>Rhodobacterales</taxon>
        <taxon>Paracoccaceae</taxon>
        <taxon>Cereibacter</taxon>
    </lineage>
</organism>
<reference key="1">
    <citation type="submission" date="2005-09" db="EMBL/GenBank/DDBJ databases">
        <title>Complete sequence of chromosome 1 of Rhodobacter sphaeroides 2.4.1.</title>
        <authorList>
            <person name="Copeland A."/>
            <person name="Lucas S."/>
            <person name="Lapidus A."/>
            <person name="Barry K."/>
            <person name="Detter J.C."/>
            <person name="Glavina T."/>
            <person name="Hammon N."/>
            <person name="Israni S."/>
            <person name="Pitluck S."/>
            <person name="Richardson P."/>
            <person name="Mackenzie C."/>
            <person name="Choudhary M."/>
            <person name="Larimer F."/>
            <person name="Hauser L.J."/>
            <person name="Land M."/>
            <person name="Donohue T.J."/>
            <person name="Kaplan S."/>
        </authorList>
    </citation>
    <scope>NUCLEOTIDE SEQUENCE [LARGE SCALE GENOMIC DNA]</scope>
    <source>
        <strain>ATCC 17023 / DSM 158 / JCM 6121 / CCUG 31486 / LMG 2827 / NBRC 12203 / NCIMB 8253 / ATH 2.4.1.</strain>
    </source>
</reference>
<name>HISX_CERS4</name>
<sequence>MPQFLDTRRPGFEADFTALLGMKREDSPDVDAVVAGIIADVRARGDAAVIELTARFDRLELTPERLAFSEAEIEAEIATVSAEDRAALELAAERIRAYHARQMPENARWTDAAGAELGWRWGPIASAGLYVPGGLASYPSSVLMNAIPARVAGVERLVVACPTPGGVVNPLVLLAARLAGVDAVYRIGGAQAVAALAYGTETIRPVDKITGPGNAYVAAAKRRVFGRVGIDMIAGPSEILVIAEGAVDPDWIALDLLSQAEHDESAQSILVTPDEALGRAVVQAVEARLETLERRAIAGASWRDYGAVIVTRDLEEAAALSDRVAPEHLELCVADPEALAARIRHAGAIFLGGWTPEAIGDYVGGPNHVLPTARSARFSSGLSVMDFLKRTTLARMTPAALRAVGPAAERLAISESLEAHGLSVRARLDRLNEG</sequence>